<sequence>MAQYTKAMGTVRKYTPATLKRDGKPAFVYVYRHLQTGQVAYTQVPGVTEHHLNRQFKDPNWENKRPTMRQDLWRPMAVADFGDHQAACDAYDGLVYLRYKRTHDGKKDIKGWRKTNAAGNVWQDGQYRPVYTQEALADLSTVTEAVKVPVTIHWEDLWRRGAAESWPENADHSVLKRWDAIYPQSLEKRLAKEAKVPGETTAEQ</sequence>
<name>MHR1_YARLI</name>
<evidence type="ECO:0000250" key="1"/>
<evidence type="ECO:0000305" key="2"/>
<dbReference type="EMBL" id="CR382131">
    <property type="protein sequence ID" value="CAG79653.1"/>
    <property type="molecule type" value="Genomic_DNA"/>
</dbReference>
<dbReference type="RefSeq" id="XP_504060.1">
    <property type="nucleotide sequence ID" value="XM_504060.1"/>
</dbReference>
<dbReference type="SMR" id="Q6C5K2"/>
<dbReference type="FunCoup" id="Q6C5K2">
    <property type="interactions" value="146"/>
</dbReference>
<dbReference type="STRING" id="284591.Q6C5K2"/>
<dbReference type="EnsemblFungi" id="CAG79653">
    <property type="protein sequence ID" value="CAG79653"/>
    <property type="gene ID" value="YALI0_E17369g"/>
</dbReference>
<dbReference type="KEGG" id="yli:2911667"/>
<dbReference type="VEuPathDB" id="FungiDB:YALI0_E17369g"/>
<dbReference type="HOGENOM" id="CLU_092898_0_0_1"/>
<dbReference type="InParanoid" id="Q6C5K2"/>
<dbReference type="OrthoDB" id="109916at4891"/>
<dbReference type="Proteomes" id="UP000001300">
    <property type="component" value="Chromosome E"/>
</dbReference>
<dbReference type="GO" id="GO:0005739">
    <property type="term" value="C:mitochondrion"/>
    <property type="evidence" value="ECO:0000318"/>
    <property type="project" value="GO_Central"/>
</dbReference>
<dbReference type="GO" id="GO:0005634">
    <property type="term" value="C:nucleus"/>
    <property type="evidence" value="ECO:0007669"/>
    <property type="project" value="UniProtKB-SubCell"/>
</dbReference>
<dbReference type="GO" id="GO:1990904">
    <property type="term" value="C:ribonucleoprotein complex"/>
    <property type="evidence" value="ECO:0007669"/>
    <property type="project" value="UniProtKB-KW"/>
</dbReference>
<dbReference type="GO" id="GO:0005840">
    <property type="term" value="C:ribosome"/>
    <property type="evidence" value="ECO:0007669"/>
    <property type="project" value="UniProtKB-KW"/>
</dbReference>
<dbReference type="GO" id="GO:0000150">
    <property type="term" value="F:DNA strand exchange activity"/>
    <property type="evidence" value="ECO:0007669"/>
    <property type="project" value="InterPro"/>
</dbReference>
<dbReference type="GO" id="GO:0003697">
    <property type="term" value="F:single-stranded DNA binding"/>
    <property type="evidence" value="ECO:0007669"/>
    <property type="project" value="InterPro"/>
</dbReference>
<dbReference type="GO" id="GO:0003735">
    <property type="term" value="F:structural constituent of ribosome"/>
    <property type="evidence" value="ECO:0000318"/>
    <property type="project" value="GO_Central"/>
</dbReference>
<dbReference type="GO" id="GO:0000002">
    <property type="term" value="P:mitochondrial genome maintenance"/>
    <property type="evidence" value="ECO:0007669"/>
    <property type="project" value="InterPro"/>
</dbReference>
<dbReference type="InterPro" id="IPR024629">
    <property type="entry name" value="Ribosomal_mL67"/>
</dbReference>
<dbReference type="PANTHER" id="PTHR28184:SF1">
    <property type="entry name" value="LARGE RIBOSOMAL SUBUNIT PROTEIN ML67"/>
    <property type="match status" value="1"/>
</dbReference>
<dbReference type="PANTHER" id="PTHR28184">
    <property type="entry name" value="MITOCHONDRIAL HOMOLOGOUS RECOMBINATION PROTEIN 1"/>
    <property type="match status" value="1"/>
</dbReference>
<dbReference type="Pfam" id="PF12829">
    <property type="entry name" value="Mhr1"/>
    <property type="match status" value="1"/>
</dbReference>
<feature type="chain" id="PRO_0000255966" description="Large ribosomal subunit protein mL67">
    <location>
        <begin position="1"/>
        <end position="204"/>
    </location>
</feature>
<accession>Q6C5K2</accession>
<gene>
    <name type="primary">MHR1</name>
    <name type="ordered locus">YALI0E17369g</name>
</gene>
<protein>
    <recommendedName>
        <fullName evidence="2">Large ribosomal subunit protein mL67</fullName>
    </recommendedName>
    <alternativeName>
        <fullName>Mitochondrial homologous recombination protein 1</fullName>
    </alternativeName>
</protein>
<reference key="1">
    <citation type="journal article" date="2004" name="Nature">
        <title>Genome evolution in yeasts.</title>
        <authorList>
            <person name="Dujon B."/>
            <person name="Sherman D."/>
            <person name="Fischer G."/>
            <person name="Durrens P."/>
            <person name="Casaregola S."/>
            <person name="Lafontaine I."/>
            <person name="de Montigny J."/>
            <person name="Marck C."/>
            <person name="Neuveglise C."/>
            <person name="Talla E."/>
            <person name="Goffard N."/>
            <person name="Frangeul L."/>
            <person name="Aigle M."/>
            <person name="Anthouard V."/>
            <person name="Babour A."/>
            <person name="Barbe V."/>
            <person name="Barnay S."/>
            <person name="Blanchin S."/>
            <person name="Beckerich J.-M."/>
            <person name="Beyne E."/>
            <person name="Bleykasten C."/>
            <person name="Boisrame A."/>
            <person name="Boyer J."/>
            <person name="Cattolico L."/>
            <person name="Confanioleri F."/>
            <person name="de Daruvar A."/>
            <person name="Despons L."/>
            <person name="Fabre E."/>
            <person name="Fairhead C."/>
            <person name="Ferry-Dumazet H."/>
            <person name="Groppi A."/>
            <person name="Hantraye F."/>
            <person name="Hennequin C."/>
            <person name="Jauniaux N."/>
            <person name="Joyet P."/>
            <person name="Kachouri R."/>
            <person name="Kerrest A."/>
            <person name="Koszul R."/>
            <person name="Lemaire M."/>
            <person name="Lesur I."/>
            <person name="Ma L."/>
            <person name="Muller H."/>
            <person name="Nicaud J.-M."/>
            <person name="Nikolski M."/>
            <person name="Oztas S."/>
            <person name="Ozier-Kalogeropoulos O."/>
            <person name="Pellenz S."/>
            <person name="Potier S."/>
            <person name="Richard G.-F."/>
            <person name="Straub M.-L."/>
            <person name="Suleau A."/>
            <person name="Swennen D."/>
            <person name="Tekaia F."/>
            <person name="Wesolowski-Louvel M."/>
            <person name="Westhof E."/>
            <person name="Wirth B."/>
            <person name="Zeniou-Meyer M."/>
            <person name="Zivanovic Y."/>
            <person name="Bolotin-Fukuhara M."/>
            <person name="Thierry A."/>
            <person name="Bouchier C."/>
            <person name="Caudron B."/>
            <person name="Scarpelli C."/>
            <person name="Gaillardin C."/>
            <person name="Weissenbach J."/>
            <person name="Wincker P."/>
            <person name="Souciet J.-L."/>
        </authorList>
    </citation>
    <scope>NUCLEOTIDE SEQUENCE [LARGE SCALE GENOMIC DNA]</scope>
    <source>
        <strain>CLIB 122 / E 150</strain>
    </source>
</reference>
<keyword id="KW-0496">Mitochondrion</keyword>
<keyword id="KW-0539">Nucleus</keyword>
<keyword id="KW-1185">Reference proteome</keyword>
<keyword id="KW-0687">Ribonucleoprotein</keyword>
<keyword id="KW-0689">Ribosomal protein</keyword>
<keyword id="KW-0804">Transcription</keyword>
<keyword id="KW-0805">Transcription regulation</keyword>
<comment type="function">
    <text evidence="1">Transcription factor involved in regulation of RNA polymerase II-dependent transcription. Also involved in regulation of mitochondrial DNA recombination, maintenance and repair, and generation of homoplasmic cells (By similarity).</text>
</comment>
<comment type="subcellular location">
    <subcellularLocation>
        <location evidence="1">Nucleus</location>
    </subcellularLocation>
    <subcellularLocation>
        <location evidence="1">Mitochondrion</location>
    </subcellularLocation>
</comment>
<comment type="similarity">
    <text evidence="2">Belongs to the mitochondrion-specific ribosomal protein mL67 family.</text>
</comment>
<proteinExistence type="inferred from homology"/>
<organism>
    <name type="scientific">Yarrowia lipolytica (strain CLIB 122 / E 150)</name>
    <name type="common">Yeast</name>
    <name type="synonym">Candida lipolytica</name>
    <dbReference type="NCBI Taxonomy" id="284591"/>
    <lineage>
        <taxon>Eukaryota</taxon>
        <taxon>Fungi</taxon>
        <taxon>Dikarya</taxon>
        <taxon>Ascomycota</taxon>
        <taxon>Saccharomycotina</taxon>
        <taxon>Dipodascomycetes</taxon>
        <taxon>Dipodascales</taxon>
        <taxon>Dipodascales incertae sedis</taxon>
        <taxon>Yarrowia</taxon>
    </lineage>
</organism>